<proteinExistence type="evidence at protein level"/>
<dbReference type="EMBL" id="EU912532">
    <property type="protein sequence ID" value="ACH53450.1"/>
    <property type="molecule type" value="mRNA"/>
</dbReference>
<dbReference type="GO" id="GO:0005576">
    <property type="term" value="C:extracellular region"/>
    <property type="evidence" value="ECO:0000314"/>
    <property type="project" value="UniProtKB"/>
</dbReference>
<dbReference type="GO" id="GO:0042742">
    <property type="term" value="P:defense response to bacterium"/>
    <property type="evidence" value="ECO:0007669"/>
    <property type="project" value="UniProtKB-KW"/>
</dbReference>
<dbReference type="InterPro" id="IPR004275">
    <property type="entry name" value="Frog_antimicrobial_propeptide"/>
</dbReference>
<dbReference type="Pfam" id="PF03032">
    <property type="entry name" value="FSAP_sig_propep"/>
    <property type="match status" value="1"/>
</dbReference>
<keyword id="KW-0027">Amidation</keyword>
<keyword id="KW-0878">Amphibian defense peptide</keyword>
<keyword id="KW-0044">Antibiotic</keyword>
<keyword id="KW-0929">Antimicrobial</keyword>
<keyword id="KW-0903">Direct protein sequencing</keyword>
<keyword id="KW-0964">Secreted</keyword>
<keyword id="KW-0732">Signal</keyword>
<protein>
    <recommendedName>
        <fullName evidence="4 6">Preprofallaxidin-3</fullName>
    </recommendedName>
    <component>
        <recommendedName>
            <fullName>Fallaxidin-1.1</fullName>
        </recommendedName>
    </component>
    <component>
        <recommendedName>
            <fullName>Fallaxidin-1.2</fullName>
        </recommendedName>
    </component>
    <component>
        <recommendedName>
            <fullName>Fallaxidin-1.3</fullName>
        </recommendedName>
    </component>
    <component>
        <recommendedName>
            <fullName>Fallaxidin-3.2</fullName>
        </recommendedName>
    </component>
</protein>
<feature type="signal peptide" evidence="1 6">
    <location>
        <begin position="1"/>
        <end position="22"/>
    </location>
</feature>
<feature type="propeptide" id="PRO_0000361706" evidence="3">
    <location>
        <begin position="23"/>
        <end position="46"/>
    </location>
</feature>
<feature type="peptide" id="PRO_0000361707" description="Fallaxidin-3.2">
    <location>
        <begin position="47"/>
        <end position="62"/>
    </location>
</feature>
<feature type="propeptide" id="PRO_0000361708" evidence="3">
    <location>
        <begin position="66"/>
        <end position="70"/>
    </location>
</feature>
<feature type="peptide" id="PRO_0000361709" description="Fallaxidin-1.3">
    <location>
        <begin position="71"/>
        <end position="74"/>
    </location>
</feature>
<feature type="propeptide" id="PRO_0000361710" evidence="3">
    <location>
        <begin position="78"/>
        <end position="82"/>
    </location>
</feature>
<feature type="peptide" id="PRO_0000361711" description="Fallaxidin-1.2">
    <location>
        <begin position="83"/>
        <end position="88"/>
    </location>
</feature>
<feature type="propeptide" id="PRO_0000361712" evidence="3">
    <location>
        <begin position="92"/>
        <end position="96"/>
    </location>
</feature>
<feature type="peptide" id="PRO_0000361713" description="Fallaxidin-1.1">
    <location>
        <begin position="97"/>
        <end position="102"/>
    </location>
</feature>
<feature type="propeptide" id="PRO_0000361714" evidence="3">
    <location>
        <begin position="106"/>
        <end position="110"/>
    </location>
</feature>
<feature type="peptide" id="PRO_0000361715" description="Fallaxidin-1.1">
    <location>
        <begin position="111"/>
        <end position="116"/>
    </location>
</feature>
<feature type="propeptide" id="PRO_0000361716" evidence="3">
    <location>
        <begin position="120"/>
        <end position="123" status="greater than"/>
    </location>
</feature>
<feature type="region of interest" description="Disordered" evidence="2">
    <location>
        <begin position="26"/>
        <end position="46"/>
    </location>
</feature>
<feature type="compositionally biased region" description="Acidic residues" evidence="2">
    <location>
        <begin position="30"/>
        <end position="42"/>
    </location>
</feature>
<feature type="modified residue" description="Leucine amide" evidence="3">
    <location>
        <position position="62"/>
    </location>
</feature>
<feature type="modified residue" description="Phenylalanine amide" evidence="3">
    <location>
        <position position="74"/>
    </location>
</feature>
<feature type="modified residue" description="Phenylalanine amide" evidence="3">
    <location>
        <position position="88"/>
    </location>
</feature>
<feature type="modified residue" description="Isoleucine amide" evidence="3">
    <location>
        <position position="102"/>
    </location>
</feature>
<feature type="modified residue" description="Isoleucine amide" evidence="3">
    <location>
        <position position="116"/>
    </location>
</feature>
<feature type="non-terminal residue" evidence="6">
    <location>
        <position position="123"/>
    </location>
</feature>
<evidence type="ECO:0000255" key="1"/>
<evidence type="ECO:0000256" key="2">
    <source>
        <dbReference type="SAM" id="MobiDB-lite"/>
    </source>
</evidence>
<evidence type="ECO:0000269" key="3">
    <source>
    </source>
</evidence>
<evidence type="ECO:0000303" key="4">
    <source>
    </source>
</evidence>
<evidence type="ECO:0000305" key="5"/>
<evidence type="ECO:0000312" key="6">
    <source>
        <dbReference type="EMBL" id="ACH53450.1"/>
    </source>
</evidence>
<reference evidence="5 6" key="1">
    <citation type="journal article" date="2008" name="Rapid Commun. Mass Spectrom.">
        <title>The fallaxidin peptides from the skin secretion of the eastern dwarf tree frog Litoria fallax. Sequence determination by positive and negative ion electrospray mass spectrometry: antimicrobial activity and cDNA cloning of the fallaxidins.</title>
        <authorList>
            <person name="Jackway R.J."/>
            <person name="Bowie J.H."/>
            <person name="Bilusich D."/>
            <person name="Musgrave I.F."/>
            <person name="Surinya-Johnson K.H."/>
            <person name="Tyler M.J."/>
            <person name="Eichinger P.C.H."/>
        </authorList>
    </citation>
    <scope>NUCLEOTIDE SEQUENCE [MRNA]</scope>
    <scope>PROTEIN SEQUENCE OF 47-62; 71-74; 83-88; 97-102 AND 111-116</scope>
    <scope>FUNCTION</scope>
    <scope>SUBCELLULAR LOCATION</scope>
    <scope>TISSUE SPECIFICITY</scope>
    <scope>AMIDATION AT LEU-62; PHE-74; PHE-88; ILE-102 AND ILE-116</scope>
    <source>
        <tissue evidence="6">Skin</tissue>
        <tissue evidence="3">Skin secretion</tissue>
    </source>
</reference>
<sequence length="123" mass="14515">MASLKKSLFLVLFLGLVSLSICEEKKRENEDDAEDENHEEESEEKRGLLDFAKHVIGIASKLGKRSEEKRYHPFGKRSEEKRYFPIPFGKRSEEKRYFPIPIGKRSEEKRYFPIPIGKKKKKK</sequence>
<name>FALX3_LITFA</name>
<comment type="function">
    <text evidence="3">Fallaxidin-1.1 shows no antibacterial activity against Gram-positive or Gram-negative bacteria. Does not inhibit the formation of NO by neuronal nitric oxide synthase. Has no effect on splenocyte proliferation or smooth muscle contraction.</text>
</comment>
<comment type="function">
    <text evidence="3">Fallaxidin-1.2 shows no antibacterial activity against Gram-positive or Gram-negative bacteria. Does not inhibit the formation of NO by neuronal nitric oxide synthase. Has no effect on splenocyte proliferation or smooth muscle contraction.</text>
</comment>
<comment type="function">
    <text evidence="3">Fallaxidin-1.3 shows no antibacterial activity against Gram-positive or Gram-negative bacteria. Does not inhibit the formation of NO by neuronal nitric oxide synthase. Has no effect on splenocyte proliferation or smooth muscle contraction.</text>
</comment>
<comment type="function">
    <text evidence="3">Fallaxidin-3.2 shows antibacterial activity against the Gram-positive bacteria E.faecalis (MIC=100 uM) and L.lactis (MIC=500 uM). No antibacterial activity against the Gram-positive bacteria B.cereus, L.innocua, M.luteus, S.epidermidis, S.uberis and S.aureus, or the Gram-negative bacteria E.cloacae and E.coli.</text>
</comment>
<comment type="subcellular location">
    <subcellularLocation>
        <location evidence="3">Secreted</location>
    </subcellularLocation>
</comment>
<comment type="tissue specificity">
    <text evidence="3">Expressed by the skin glands.</text>
</comment>
<comment type="similarity">
    <text evidence="1">Belongs to the frog skin active peptide (FSAP) family. Brevinin subfamily.</text>
</comment>
<accession>B5LUQ7</accession>
<organism>
    <name type="scientific">Litoria fallax</name>
    <name type="common">Eastern dwarf tree frog</name>
    <name type="synonym">Hylomantis fallax</name>
    <dbReference type="NCBI Taxonomy" id="115422"/>
    <lineage>
        <taxon>Eukaryota</taxon>
        <taxon>Metazoa</taxon>
        <taxon>Chordata</taxon>
        <taxon>Craniata</taxon>
        <taxon>Vertebrata</taxon>
        <taxon>Euteleostomi</taxon>
        <taxon>Amphibia</taxon>
        <taxon>Batrachia</taxon>
        <taxon>Anura</taxon>
        <taxon>Neobatrachia</taxon>
        <taxon>Hyloidea</taxon>
        <taxon>Hylidae</taxon>
        <taxon>Pelodryadinae</taxon>
        <taxon>Litoria</taxon>
    </lineage>
</organism>